<dbReference type="EC" id="3.11.1.1" evidence="1"/>
<dbReference type="EMBL" id="CP000140">
    <property type="protein sequence ID" value="ABR44565.1"/>
    <property type="molecule type" value="Genomic_DNA"/>
</dbReference>
<dbReference type="RefSeq" id="WP_005860651.1">
    <property type="nucleotide sequence ID" value="NC_009615.1"/>
</dbReference>
<dbReference type="SMR" id="A6LFV1"/>
<dbReference type="STRING" id="435591.BDI_2852"/>
<dbReference type="PaxDb" id="435591-BDI_2852"/>
<dbReference type="KEGG" id="pdi:BDI_2852"/>
<dbReference type="eggNOG" id="COG0637">
    <property type="taxonomic scope" value="Bacteria"/>
</dbReference>
<dbReference type="HOGENOM" id="CLU_045011_12_0_10"/>
<dbReference type="BioCyc" id="PDIS435591:G1G5A-2929-MONOMER"/>
<dbReference type="Proteomes" id="UP000000566">
    <property type="component" value="Chromosome"/>
</dbReference>
<dbReference type="GO" id="GO:0005829">
    <property type="term" value="C:cytosol"/>
    <property type="evidence" value="ECO:0007669"/>
    <property type="project" value="TreeGrafter"/>
</dbReference>
<dbReference type="GO" id="GO:0000287">
    <property type="term" value="F:magnesium ion binding"/>
    <property type="evidence" value="ECO:0007669"/>
    <property type="project" value="UniProtKB-UniRule"/>
</dbReference>
<dbReference type="GO" id="GO:0008967">
    <property type="term" value="F:phosphoglycolate phosphatase activity"/>
    <property type="evidence" value="ECO:0007669"/>
    <property type="project" value="TreeGrafter"/>
</dbReference>
<dbReference type="GO" id="GO:0050194">
    <property type="term" value="F:phosphonoacetaldehyde hydrolase activity"/>
    <property type="evidence" value="ECO:0007669"/>
    <property type="project" value="UniProtKB-UniRule"/>
</dbReference>
<dbReference type="GO" id="GO:0006281">
    <property type="term" value="P:DNA repair"/>
    <property type="evidence" value="ECO:0007669"/>
    <property type="project" value="TreeGrafter"/>
</dbReference>
<dbReference type="GO" id="GO:0019700">
    <property type="term" value="P:organic phosphonate catabolic process"/>
    <property type="evidence" value="ECO:0007669"/>
    <property type="project" value="InterPro"/>
</dbReference>
<dbReference type="CDD" id="cd02586">
    <property type="entry name" value="HAD_PHN"/>
    <property type="match status" value="1"/>
</dbReference>
<dbReference type="Gene3D" id="3.40.50.1000">
    <property type="entry name" value="HAD superfamily/HAD-like"/>
    <property type="match status" value="1"/>
</dbReference>
<dbReference type="Gene3D" id="1.10.150.240">
    <property type="entry name" value="Putative phosphatase, domain 2"/>
    <property type="match status" value="1"/>
</dbReference>
<dbReference type="HAMAP" id="MF_01375">
    <property type="entry name" value="PhnX"/>
    <property type="match status" value="1"/>
</dbReference>
<dbReference type="InterPro" id="IPR050155">
    <property type="entry name" value="HAD-like_hydrolase_sf"/>
</dbReference>
<dbReference type="InterPro" id="IPR036412">
    <property type="entry name" value="HAD-like_sf"/>
</dbReference>
<dbReference type="InterPro" id="IPR023214">
    <property type="entry name" value="HAD_sf"/>
</dbReference>
<dbReference type="InterPro" id="IPR023198">
    <property type="entry name" value="PGP-like_dom2"/>
</dbReference>
<dbReference type="InterPro" id="IPR006323">
    <property type="entry name" value="Phosphonoacetald_hydro"/>
</dbReference>
<dbReference type="NCBIfam" id="TIGR01422">
    <property type="entry name" value="phosphonatase"/>
    <property type="match status" value="1"/>
</dbReference>
<dbReference type="PANTHER" id="PTHR43434">
    <property type="entry name" value="PHOSPHOGLYCOLATE PHOSPHATASE"/>
    <property type="match status" value="1"/>
</dbReference>
<dbReference type="PANTHER" id="PTHR43434:SF19">
    <property type="entry name" value="PHOSPHONOACETALDEHYDE HYDROLASE"/>
    <property type="match status" value="1"/>
</dbReference>
<dbReference type="Pfam" id="PF00702">
    <property type="entry name" value="Hydrolase"/>
    <property type="match status" value="1"/>
</dbReference>
<dbReference type="SFLD" id="SFLDG01135">
    <property type="entry name" value="C1.5.6:_HAD__Beta-PGM__Phospha"/>
    <property type="match status" value="1"/>
</dbReference>
<dbReference type="SFLD" id="SFLDG01129">
    <property type="entry name" value="C1.5:_HAD__Beta-PGM__Phosphata"/>
    <property type="match status" value="1"/>
</dbReference>
<dbReference type="SUPFAM" id="SSF56784">
    <property type="entry name" value="HAD-like"/>
    <property type="match status" value="1"/>
</dbReference>
<accession>A6LFV1</accession>
<keyword id="KW-0378">Hydrolase</keyword>
<keyword id="KW-0460">Magnesium</keyword>
<keyword id="KW-0479">Metal-binding</keyword>
<keyword id="KW-1185">Reference proteome</keyword>
<keyword id="KW-0704">Schiff base</keyword>
<protein>
    <recommendedName>
        <fullName evidence="1">Phosphonoacetaldehyde hydrolase</fullName>
        <shortName evidence="1">Phosphonatase</shortName>
        <ecNumber evidence="1">3.11.1.1</ecNumber>
    </recommendedName>
    <alternativeName>
        <fullName evidence="1">Phosphonoacetaldehyde phosphonohydrolase</fullName>
    </alternativeName>
</protein>
<name>PHNX_PARD8</name>
<sequence length="264" mass="29557">MKKISGVIMDWAGTAVDYGCFAPLNAFLKVFSEEKGIDITYRQAREPMGLLKIDHIKAILSMPEVNEKFRALYKRDWNKRDVDEMYTSFEKHLFASLKDFTTPIPGVLETMAMLREQGIKIGSTTGYTAKMMEIVRPGAEAKGYRVDNLVTPNEVPAGRPAPYMIYKNMIDLAIPSVDQVVKVGDTIADIKEGVNAKVWSVGIVTGSNEMGVSEEEYNSRPAEEWESLKKEVRERMLAAGAHFVLDTIAELPACIEKINNRDQA</sequence>
<evidence type="ECO:0000255" key="1">
    <source>
        <dbReference type="HAMAP-Rule" id="MF_01375"/>
    </source>
</evidence>
<feature type="chain" id="PRO_1000068238" description="Phosphonoacetaldehyde hydrolase">
    <location>
        <begin position="1"/>
        <end position="264"/>
    </location>
</feature>
<feature type="active site" description="Nucleophile" evidence="1">
    <location>
        <position position="10"/>
    </location>
</feature>
<feature type="active site" description="Schiff-base intermediate with substrate" evidence="1">
    <location>
        <position position="52"/>
    </location>
</feature>
<feature type="binding site" evidence="1">
    <location>
        <position position="10"/>
    </location>
    <ligand>
        <name>Mg(2+)</name>
        <dbReference type="ChEBI" id="CHEBI:18420"/>
    </ligand>
</feature>
<feature type="binding site" evidence="1">
    <location>
        <position position="12"/>
    </location>
    <ligand>
        <name>Mg(2+)</name>
        <dbReference type="ChEBI" id="CHEBI:18420"/>
    </ligand>
</feature>
<feature type="binding site" evidence="1">
    <location>
        <position position="185"/>
    </location>
    <ligand>
        <name>Mg(2+)</name>
        <dbReference type="ChEBI" id="CHEBI:18420"/>
    </ligand>
</feature>
<organism>
    <name type="scientific">Parabacteroides distasonis (strain ATCC 8503 / DSM 20701 / CIP 104284 / JCM 5825 / NCTC 11152)</name>
    <dbReference type="NCBI Taxonomy" id="435591"/>
    <lineage>
        <taxon>Bacteria</taxon>
        <taxon>Pseudomonadati</taxon>
        <taxon>Bacteroidota</taxon>
        <taxon>Bacteroidia</taxon>
        <taxon>Bacteroidales</taxon>
        <taxon>Tannerellaceae</taxon>
        <taxon>Parabacteroides</taxon>
    </lineage>
</organism>
<comment type="function">
    <text evidence="1">Involved in phosphonate degradation.</text>
</comment>
<comment type="catalytic activity">
    <reaction evidence="1">
        <text>phosphonoacetaldehyde + H2O = acetaldehyde + phosphate + H(+)</text>
        <dbReference type="Rhea" id="RHEA:18905"/>
        <dbReference type="ChEBI" id="CHEBI:15343"/>
        <dbReference type="ChEBI" id="CHEBI:15377"/>
        <dbReference type="ChEBI" id="CHEBI:15378"/>
        <dbReference type="ChEBI" id="CHEBI:43474"/>
        <dbReference type="ChEBI" id="CHEBI:58383"/>
        <dbReference type="EC" id="3.11.1.1"/>
    </reaction>
</comment>
<comment type="cofactor">
    <cofactor evidence="1">
        <name>Mg(2+)</name>
        <dbReference type="ChEBI" id="CHEBI:18420"/>
    </cofactor>
    <text evidence="1">Binds 1 Mg(2+) ion per subunit.</text>
</comment>
<comment type="subunit">
    <text evidence="1">Homodimer.</text>
</comment>
<comment type="similarity">
    <text evidence="1">Belongs to the HAD-like hydrolase superfamily. PhnX family.</text>
</comment>
<reference key="1">
    <citation type="journal article" date="2007" name="PLoS Biol.">
        <title>Evolution of symbiotic bacteria in the distal human intestine.</title>
        <authorList>
            <person name="Xu J."/>
            <person name="Mahowald M.A."/>
            <person name="Ley R.E."/>
            <person name="Lozupone C.A."/>
            <person name="Hamady M."/>
            <person name="Martens E.C."/>
            <person name="Henrissat B."/>
            <person name="Coutinho P.M."/>
            <person name="Minx P."/>
            <person name="Latreille P."/>
            <person name="Cordum H."/>
            <person name="Van Brunt A."/>
            <person name="Kim K."/>
            <person name="Fulton R.S."/>
            <person name="Fulton L.A."/>
            <person name="Clifton S.W."/>
            <person name="Wilson R.K."/>
            <person name="Knight R.D."/>
            <person name="Gordon J.I."/>
        </authorList>
    </citation>
    <scope>NUCLEOTIDE SEQUENCE [LARGE SCALE GENOMIC DNA]</scope>
    <source>
        <strain>ATCC 8503 / DSM 20701 / CIP 104284 / JCM 5825 / NCTC 11152</strain>
    </source>
</reference>
<proteinExistence type="inferred from homology"/>
<gene>
    <name evidence="1" type="primary">phnX</name>
    <name type="ordered locus">BDI_2852</name>
</gene>